<comment type="function">
    <text evidence="1">Cleaves both 3' and 5' ssDNA extremities of branched DNA structures.</text>
</comment>
<comment type="subcellular location">
    <subcellularLocation>
        <location evidence="1">Cytoplasm</location>
    </subcellularLocation>
</comment>
<comment type="similarity">
    <text evidence="1">Belongs to the NucS endonuclease family.</text>
</comment>
<sequence length="231" mass="25399">MRLVIARCSVDYVGRLKAHLPLATRLLLVKADGSVLVHSDGGSYKPLNWMSPPATLRVSSPEDVDLELGVAEQWTVQSAKTDDRLIINIHEKLSETSHDLGVDPGLIKDGVEADLQRLLADQIETLGTGYSLIRREYFTAIGPVDILARDGDGATVAIELKRRGDIDGVEQLTRYLELLNRDPLLAPVRGIFAAQQIKPQAKVLANDRGIDCVTLDYDAMRGVDDSESRLF</sequence>
<dbReference type="EC" id="3.1.-.-" evidence="1"/>
<dbReference type="EMBL" id="CP001341">
    <property type="protein sequence ID" value="ACL40297.1"/>
    <property type="molecule type" value="Genomic_DNA"/>
</dbReference>
<dbReference type="RefSeq" id="WP_015937511.1">
    <property type="nucleotide sequence ID" value="NC_011886.1"/>
</dbReference>
<dbReference type="SMR" id="B8HAY3"/>
<dbReference type="STRING" id="452863.Achl_2332"/>
<dbReference type="KEGG" id="ach:Achl_2332"/>
<dbReference type="eggNOG" id="COG1637">
    <property type="taxonomic scope" value="Bacteria"/>
</dbReference>
<dbReference type="HOGENOM" id="CLU_069350_0_0_11"/>
<dbReference type="OrthoDB" id="3344925at2"/>
<dbReference type="Proteomes" id="UP000002505">
    <property type="component" value="Chromosome"/>
</dbReference>
<dbReference type="GO" id="GO:0005737">
    <property type="term" value="C:cytoplasm"/>
    <property type="evidence" value="ECO:0007669"/>
    <property type="project" value="UniProtKB-SubCell"/>
</dbReference>
<dbReference type="GO" id="GO:0003677">
    <property type="term" value="F:DNA binding"/>
    <property type="evidence" value="ECO:0007669"/>
    <property type="project" value="UniProtKB-KW"/>
</dbReference>
<dbReference type="GO" id="GO:0000014">
    <property type="term" value="F:single-stranded DNA endodeoxyribonuclease activity"/>
    <property type="evidence" value="ECO:0007669"/>
    <property type="project" value="UniProtKB-UniRule"/>
</dbReference>
<dbReference type="CDD" id="cd22341">
    <property type="entry name" value="NucS-like"/>
    <property type="match status" value="1"/>
</dbReference>
<dbReference type="Gene3D" id="2.70.180.20">
    <property type="match status" value="1"/>
</dbReference>
<dbReference type="Gene3D" id="3.40.1350.10">
    <property type="match status" value="1"/>
</dbReference>
<dbReference type="HAMAP" id="MF_00722">
    <property type="entry name" value="NucS"/>
    <property type="match status" value="1"/>
</dbReference>
<dbReference type="InterPro" id="IPR002793">
    <property type="entry name" value="Endonuclease_NucS"/>
</dbReference>
<dbReference type="InterPro" id="IPR048301">
    <property type="entry name" value="NucS_C"/>
</dbReference>
<dbReference type="InterPro" id="IPR048302">
    <property type="entry name" value="NucS_N"/>
</dbReference>
<dbReference type="InterPro" id="IPR049173">
    <property type="entry name" value="NucS_N_sf"/>
</dbReference>
<dbReference type="InterPro" id="IPR011856">
    <property type="entry name" value="tRNA_endonuc-like_dom_sf"/>
</dbReference>
<dbReference type="NCBIfam" id="NF002876">
    <property type="entry name" value="PRK03298.1"/>
    <property type="match status" value="1"/>
</dbReference>
<dbReference type="PANTHER" id="PTHR38814">
    <property type="entry name" value="ENDONUCLEASE NUCS"/>
    <property type="match status" value="1"/>
</dbReference>
<dbReference type="PANTHER" id="PTHR38814:SF1">
    <property type="entry name" value="ENDONUCLEASE NUCS"/>
    <property type="match status" value="1"/>
</dbReference>
<dbReference type="Pfam" id="PF01939">
    <property type="entry name" value="NucS_C"/>
    <property type="match status" value="1"/>
</dbReference>
<dbReference type="Pfam" id="PF21003">
    <property type="entry name" value="NucS_N"/>
    <property type="match status" value="1"/>
</dbReference>
<proteinExistence type="inferred from homology"/>
<reference key="1">
    <citation type="submission" date="2009-01" db="EMBL/GenBank/DDBJ databases">
        <title>Complete sequence of chromosome of Arthrobacter chlorophenolicus A6.</title>
        <authorList>
            <consortium name="US DOE Joint Genome Institute"/>
            <person name="Lucas S."/>
            <person name="Copeland A."/>
            <person name="Lapidus A."/>
            <person name="Glavina del Rio T."/>
            <person name="Tice H."/>
            <person name="Bruce D."/>
            <person name="Goodwin L."/>
            <person name="Pitluck S."/>
            <person name="Goltsman E."/>
            <person name="Clum A."/>
            <person name="Larimer F."/>
            <person name="Land M."/>
            <person name="Hauser L."/>
            <person name="Kyrpides N."/>
            <person name="Mikhailova N."/>
            <person name="Jansson J."/>
            <person name="Richardson P."/>
        </authorList>
    </citation>
    <scope>NUCLEOTIDE SEQUENCE [LARGE SCALE GENOMIC DNA]</scope>
    <source>
        <strain>ATCC 700700 / DSM 12829 / CIP 107037 / JCM 12360 / KCTC 9906 / NCIMB 13794 / A6</strain>
    </source>
</reference>
<protein>
    <recommendedName>
        <fullName evidence="1">Endonuclease NucS</fullName>
        <ecNumber evidence="1">3.1.-.-</ecNumber>
    </recommendedName>
</protein>
<accession>B8HAY3</accession>
<name>NUCS_PSECP</name>
<gene>
    <name evidence="1" type="primary">nucS</name>
    <name type="ordered locus">Achl_2332</name>
</gene>
<feature type="chain" id="PRO_1000198193" description="Endonuclease NucS">
    <location>
        <begin position="1"/>
        <end position="231"/>
    </location>
</feature>
<organism>
    <name type="scientific">Pseudarthrobacter chlorophenolicus (strain ATCC 700700 / DSM 12829 / CIP 107037 / JCM 12360 / KCTC 9906 / NCIMB 13794 / A6)</name>
    <name type="common">Arthrobacter chlorophenolicus</name>
    <dbReference type="NCBI Taxonomy" id="452863"/>
    <lineage>
        <taxon>Bacteria</taxon>
        <taxon>Bacillati</taxon>
        <taxon>Actinomycetota</taxon>
        <taxon>Actinomycetes</taxon>
        <taxon>Micrococcales</taxon>
        <taxon>Micrococcaceae</taxon>
        <taxon>Pseudarthrobacter</taxon>
    </lineage>
</organism>
<keyword id="KW-0963">Cytoplasm</keyword>
<keyword id="KW-0238">DNA-binding</keyword>
<keyword id="KW-0255">Endonuclease</keyword>
<keyword id="KW-0378">Hydrolase</keyword>
<keyword id="KW-0540">Nuclease</keyword>
<evidence type="ECO:0000255" key="1">
    <source>
        <dbReference type="HAMAP-Rule" id="MF_00722"/>
    </source>
</evidence>